<keyword id="KW-0732">Signal</keyword>
<feature type="signal peptide" evidence="1">
    <location>
        <begin position="1"/>
        <end position="20"/>
    </location>
</feature>
<feature type="chain" id="PRO_1000148488" description="UPF0319 protein YccT">
    <location>
        <begin position="21"/>
        <end position="220"/>
    </location>
</feature>
<comment type="similarity">
    <text evidence="1">Belongs to the UPF0319 family.</text>
</comment>
<name>YCCT_ECO81</name>
<evidence type="ECO:0000255" key="1">
    <source>
        <dbReference type="HAMAP-Rule" id="MF_00789"/>
    </source>
</evidence>
<dbReference type="EMBL" id="CU928162">
    <property type="protein sequence ID" value="CAR07189.1"/>
    <property type="molecule type" value="Genomic_DNA"/>
</dbReference>
<dbReference type="RefSeq" id="WP_000847791.1">
    <property type="nucleotide sequence ID" value="NC_011745.1"/>
</dbReference>
<dbReference type="KEGG" id="ecq:ECED1_0987"/>
<dbReference type="HOGENOM" id="CLU_073782_2_0_6"/>
<dbReference type="Proteomes" id="UP000000748">
    <property type="component" value="Chromosome"/>
</dbReference>
<dbReference type="HAMAP" id="MF_00789">
    <property type="entry name" value="UPF0319"/>
    <property type="match status" value="1"/>
</dbReference>
<dbReference type="InterPro" id="IPR018635">
    <property type="entry name" value="UPF0319"/>
</dbReference>
<dbReference type="NCBIfam" id="NF047712">
    <property type="entry name" value="CrliSynInhib"/>
    <property type="match status" value="1"/>
</dbReference>
<dbReference type="NCBIfam" id="NF002967">
    <property type="entry name" value="PRK03641.1"/>
    <property type="match status" value="1"/>
</dbReference>
<dbReference type="PANTHER" id="PTHR38108">
    <property type="entry name" value="UPF0319 PROTEIN YCCT"/>
    <property type="match status" value="1"/>
</dbReference>
<dbReference type="PANTHER" id="PTHR38108:SF1">
    <property type="entry name" value="UPF0319 PROTEIN YCCT"/>
    <property type="match status" value="1"/>
</dbReference>
<dbReference type="Pfam" id="PF09829">
    <property type="entry name" value="DUF2057"/>
    <property type="match status" value="1"/>
</dbReference>
<sequence>MKTGIVTTLIALCLPVSVFATTLRLSTDVDLLVLDGKKVSSSLLRGADSIELDNGPHQLVFRVEKTIHLSNSEERLYISPPLVVSFNTQLINQVNFRLPRLENEREANHFDAAPRLELLDGDATPIPVKLDILAITSTAKTIDYEVEVERYNKSAKRASLPQFATMMADDSTLLSGVSELDAIPPQSQVLTEQRLKYWFKLADPQTRNTFLQWAEKQPSS</sequence>
<organism>
    <name type="scientific">Escherichia coli O81 (strain ED1a)</name>
    <dbReference type="NCBI Taxonomy" id="585397"/>
    <lineage>
        <taxon>Bacteria</taxon>
        <taxon>Pseudomonadati</taxon>
        <taxon>Pseudomonadota</taxon>
        <taxon>Gammaproteobacteria</taxon>
        <taxon>Enterobacterales</taxon>
        <taxon>Enterobacteriaceae</taxon>
        <taxon>Escherichia</taxon>
    </lineage>
</organism>
<accession>B7MS75</accession>
<gene>
    <name evidence="1" type="primary">yccT</name>
    <name type="ordered locus">ECED1_0987</name>
</gene>
<proteinExistence type="inferred from homology"/>
<protein>
    <recommendedName>
        <fullName evidence="1">UPF0319 protein YccT</fullName>
    </recommendedName>
</protein>
<reference key="1">
    <citation type="journal article" date="2009" name="PLoS Genet.">
        <title>Organised genome dynamics in the Escherichia coli species results in highly diverse adaptive paths.</title>
        <authorList>
            <person name="Touchon M."/>
            <person name="Hoede C."/>
            <person name="Tenaillon O."/>
            <person name="Barbe V."/>
            <person name="Baeriswyl S."/>
            <person name="Bidet P."/>
            <person name="Bingen E."/>
            <person name="Bonacorsi S."/>
            <person name="Bouchier C."/>
            <person name="Bouvet O."/>
            <person name="Calteau A."/>
            <person name="Chiapello H."/>
            <person name="Clermont O."/>
            <person name="Cruveiller S."/>
            <person name="Danchin A."/>
            <person name="Diard M."/>
            <person name="Dossat C."/>
            <person name="Karoui M.E."/>
            <person name="Frapy E."/>
            <person name="Garry L."/>
            <person name="Ghigo J.M."/>
            <person name="Gilles A.M."/>
            <person name="Johnson J."/>
            <person name="Le Bouguenec C."/>
            <person name="Lescat M."/>
            <person name="Mangenot S."/>
            <person name="Martinez-Jehanne V."/>
            <person name="Matic I."/>
            <person name="Nassif X."/>
            <person name="Oztas S."/>
            <person name="Petit M.A."/>
            <person name="Pichon C."/>
            <person name="Rouy Z."/>
            <person name="Ruf C.S."/>
            <person name="Schneider D."/>
            <person name="Tourret J."/>
            <person name="Vacherie B."/>
            <person name="Vallenet D."/>
            <person name="Medigue C."/>
            <person name="Rocha E.P.C."/>
            <person name="Denamur E."/>
        </authorList>
    </citation>
    <scope>NUCLEOTIDE SEQUENCE [LARGE SCALE GENOMIC DNA]</scope>
    <source>
        <strain>ED1a</strain>
    </source>
</reference>